<accession>Q72KF8</accession>
<sequence>MRGVVGVLALQGDFREHKEALKRLGIEAKEVRKVKDLEGLKALIVPGGESTTIGKLAREYGLEEAVRRRVEEGTLALFGTCAGAIWLAREILGYPEQPRLGVLDAAVERNAFGRQVESFEEDLEVEGLGPFHGVFIRAPVFRRLGEGVEVLARLGDLPVLVRQGKVLASSFHPELTEDPRLHRYFLELAGV</sequence>
<keyword id="KW-0315">Glutamine amidotransferase</keyword>
<keyword id="KW-0378">Hydrolase</keyword>
<keyword id="KW-0456">Lyase</keyword>
<keyword id="KW-0663">Pyridoxal phosphate</keyword>
<comment type="function">
    <text evidence="1">Catalyzes the hydrolysis of glutamine to glutamate and ammonia as part of the biosynthesis of pyridoxal 5'-phosphate. The resulting ammonia molecule is channeled to the active site of PdxS.</text>
</comment>
<comment type="catalytic activity">
    <reaction evidence="1">
        <text>aldehydo-D-ribose 5-phosphate + D-glyceraldehyde 3-phosphate + L-glutamine = pyridoxal 5'-phosphate + L-glutamate + phosphate + 3 H2O + H(+)</text>
        <dbReference type="Rhea" id="RHEA:31507"/>
        <dbReference type="ChEBI" id="CHEBI:15377"/>
        <dbReference type="ChEBI" id="CHEBI:15378"/>
        <dbReference type="ChEBI" id="CHEBI:29985"/>
        <dbReference type="ChEBI" id="CHEBI:43474"/>
        <dbReference type="ChEBI" id="CHEBI:58273"/>
        <dbReference type="ChEBI" id="CHEBI:58359"/>
        <dbReference type="ChEBI" id="CHEBI:59776"/>
        <dbReference type="ChEBI" id="CHEBI:597326"/>
        <dbReference type="EC" id="4.3.3.6"/>
    </reaction>
</comment>
<comment type="catalytic activity">
    <reaction evidence="1">
        <text>L-glutamine + H2O = L-glutamate + NH4(+)</text>
        <dbReference type="Rhea" id="RHEA:15889"/>
        <dbReference type="ChEBI" id="CHEBI:15377"/>
        <dbReference type="ChEBI" id="CHEBI:28938"/>
        <dbReference type="ChEBI" id="CHEBI:29985"/>
        <dbReference type="ChEBI" id="CHEBI:58359"/>
        <dbReference type="EC" id="3.5.1.2"/>
    </reaction>
</comment>
<comment type="pathway">
    <text evidence="1">Cofactor biosynthesis; pyridoxal 5'-phosphate biosynthesis.</text>
</comment>
<comment type="subunit">
    <text evidence="1">In the presence of PdxS, forms a dodecamer of heterodimers. Only shows activity in the heterodimer.</text>
</comment>
<comment type="similarity">
    <text evidence="1">Belongs to the glutaminase PdxT/SNO family.</text>
</comment>
<proteinExistence type="inferred from homology"/>
<evidence type="ECO:0000255" key="1">
    <source>
        <dbReference type="HAMAP-Rule" id="MF_01615"/>
    </source>
</evidence>
<feature type="chain" id="PRO_0000135670" description="Pyridoxal 5'-phosphate synthase subunit PdxT">
    <location>
        <begin position="1"/>
        <end position="191"/>
    </location>
</feature>
<feature type="active site" description="Nucleophile" evidence="1">
    <location>
        <position position="81"/>
    </location>
</feature>
<feature type="active site" description="Charge relay system" evidence="1">
    <location>
        <position position="172"/>
    </location>
</feature>
<feature type="active site" description="Charge relay system" evidence="1">
    <location>
        <position position="174"/>
    </location>
</feature>
<feature type="binding site" evidence="1">
    <location>
        <begin position="48"/>
        <end position="50"/>
    </location>
    <ligand>
        <name>L-glutamine</name>
        <dbReference type="ChEBI" id="CHEBI:58359"/>
    </ligand>
</feature>
<feature type="binding site" evidence="1">
    <location>
        <position position="109"/>
    </location>
    <ligand>
        <name>L-glutamine</name>
        <dbReference type="ChEBI" id="CHEBI:58359"/>
    </ligand>
</feature>
<feature type="binding site" evidence="1">
    <location>
        <begin position="136"/>
        <end position="137"/>
    </location>
    <ligand>
        <name>L-glutamine</name>
        <dbReference type="ChEBI" id="CHEBI:58359"/>
    </ligand>
</feature>
<organism>
    <name type="scientific">Thermus thermophilus (strain ATCC BAA-163 / DSM 7039 / HB27)</name>
    <dbReference type="NCBI Taxonomy" id="262724"/>
    <lineage>
        <taxon>Bacteria</taxon>
        <taxon>Thermotogati</taxon>
        <taxon>Deinococcota</taxon>
        <taxon>Deinococci</taxon>
        <taxon>Thermales</taxon>
        <taxon>Thermaceae</taxon>
        <taxon>Thermus</taxon>
    </lineage>
</organism>
<protein>
    <recommendedName>
        <fullName evidence="1">Pyridoxal 5'-phosphate synthase subunit PdxT</fullName>
        <ecNumber evidence="1">4.3.3.6</ecNumber>
    </recommendedName>
    <alternativeName>
        <fullName evidence="1">Pdx2</fullName>
    </alternativeName>
    <alternativeName>
        <fullName evidence="1">Pyridoxal 5'-phosphate synthase glutaminase subunit</fullName>
        <ecNumber evidence="1">3.5.1.2</ecNumber>
    </alternativeName>
</protein>
<gene>
    <name evidence="1" type="primary">pdxT</name>
    <name type="ordered locus">TT_C0355</name>
</gene>
<dbReference type="EC" id="4.3.3.6" evidence="1"/>
<dbReference type="EC" id="3.5.1.2" evidence="1"/>
<dbReference type="EMBL" id="AE017221">
    <property type="protein sequence ID" value="AAS80703.1"/>
    <property type="molecule type" value="Genomic_DNA"/>
</dbReference>
<dbReference type="RefSeq" id="WP_011172805.1">
    <property type="nucleotide sequence ID" value="NC_005835.1"/>
</dbReference>
<dbReference type="SMR" id="Q72KF8"/>
<dbReference type="KEGG" id="tth:TT_C0355"/>
<dbReference type="eggNOG" id="COG0311">
    <property type="taxonomic scope" value="Bacteria"/>
</dbReference>
<dbReference type="HOGENOM" id="CLU_069674_2_0_0"/>
<dbReference type="OrthoDB" id="9810320at2"/>
<dbReference type="UniPathway" id="UPA00245"/>
<dbReference type="Proteomes" id="UP000000592">
    <property type="component" value="Chromosome"/>
</dbReference>
<dbReference type="GO" id="GO:0005829">
    <property type="term" value="C:cytosol"/>
    <property type="evidence" value="ECO:0007669"/>
    <property type="project" value="TreeGrafter"/>
</dbReference>
<dbReference type="GO" id="GO:1903600">
    <property type="term" value="C:glutaminase complex"/>
    <property type="evidence" value="ECO:0007669"/>
    <property type="project" value="TreeGrafter"/>
</dbReference>
<dbReference type="GO" id="GO:0004359">
    <property type="term" value="F:glutaminase activity"/>
    <property type="evidence" value="ECO:0007669"/>
    <property type="project" value="UniProtKB-UniRule"/>
</dbReference>
<dbReference type="GO" id="GO:0036381">
    <property type="term" value="F:pyridoxal 5'-phosphate synthase (glutamine hydrolysing) activity"/>
    <property type="evidence" value="ECO:0007669"/>
    <property type="project" value="UniProtKB-UniRule"/>
</dbReference>
<dbReference type="GO" id="GO:0006543">
    <property type="term" value="P:glutamine catabolic process"/>
    <property type="evidence" value="ECO:0007669"/>
    <property type="project" value="UniProtKB-UniRule"/>
</dbReference>
<dbReference type="GO" id="GO:0042823">
    <property type="term" value="P:pyridoxal phosphate biosynthetic process"/>
    <property type="evidence" value="ECO:0007669"/>
    <property type="project" value="UniProtKB-UniRule"/>
</dbReference>
<dbReference type="GO" id="GO:0008614">
    <property type="term" value="P:pyridoxine metabolic process"/>
    <property type="evidence" value="ECO:0007669"/>
    <property type="project" value="TreeGrafter"/>
</dbReference>
<dbReference type="CDD" id="cd01749">
    <property type="entry name" value="GATase1_PB"/>
    <property type="match status" value="1"/>
</dbReference>
<dbReference type="FunFam" id="3.40.50.880:FF:000010">
    <property type="entry name" value="uncharacterized protein LOC100176842 isoform X2"/>
    <property type="match status" value="1"/>
</dbReference>
<dbReference type="Gene3D" id="3.40.50.880">
    <property type="match status" value="1"/>
</dbReference>
<dbReference type="HAMAP" id="MF_01615">
    <property type="entry name" value="PdxT"/>
    <property type="match status" value="1"/>
</dbReference>
<dbReference type="InterPro" id="IPR029062">
    <property type="entry name" value="Class_I_gatase-like"/>
</dbReference>
<dbReference type="InterPro" id="IPR002161">
    <property type="entry name" value="PdxT/SNO"/>
</dbReference>
<dbReference type="InterPro" id="IPR021196">
    <property type="entry name" value="PdxT/SNO_CS"/>
</dbReference>
<dbReference type="NCBIfam" id="TIGR03800">
    <property type="entry name" value="PLP_synth_Pdx2"/>
    <property type="match status" value="1"/>
</dbReference>
<dbReference type="PANTHER" id="PTHR31559">
    <property type="entry name" value="PYRIDOXAL 5'-PHOSPHATE SYNTHASE SUBUNIT SNO"/>
    <property type="match status" value="1"/>
</dbReference>
<dbReference type="PANTHER" id="PTHR31559:SF0">
    <property type="entry name" value="PYRIDOXAL 5'-PHOSPHATE SYNTHASE SUBUNIT SNO1-RELATED"/>
    <property type="match status" value="1"/>
</dbReference>
<dbReference type="Pfam" id="PF01174">
    <property type="entry name" value="SNO"/>
    <property type="match status" value="1"/>
</dbReference>
<dbReference type="PIRSF" id="PIRSF005639">
    <property type="entry name" value="Glut_amidoT_SNO"/>
    <property type="match status" value="1"/>
</dbReference>
<dbReference type="SUPFAM" id="SSF52317">
    <property type="entry name" value="Class I glutamine amidotransferase-like"/>
    <property type="match status" value="1"/>
</dbReference>
<dbReference type="PROSITE" id="PS01236">
    <property type="entry name" value="PDXT_SNO_1"/>
    <property type="match status" value="1"/>
</dbReference>
<dbReference type="PROSITE" id="PS51130">
    <property type="entry name" value="PDXT_SNO_2"/>
    <property type="match status" value="1"/>
</dbReference>
<reference key="1">
    <citation type="journal article" date="2004" name="Nat. Biotechnol.">
        <title>The genome sequence of the extreme thermophile Thermus thermophilus.</title>
        <authorList>
            <person name="Henne A."/>
            <person name="Brueggemann H."/>
            <person name="Raasch C."/>
            <person name="Wiezer A."/>
            <person name="Hartsch T."/>
            <person name="Liesegang H."/>
            <person name="Johann A."/>
            <person name="Lienard T."/>
            <person name="Gohl O."/>
            <person name="Martinez-Arias R."/>
            <person name="Jacobi C."/>
            <person name="Starkuviene V."/>
            <person name="Schlenczeck S."/>
            <person name="Dencker S."/>
            <person name="Huber R."/>
            <person name="Klenk H.-P."/>
            <person name="Kramer W."/>
            <person name="Merkl R."/>
            <person name="Gottschalk G."/>
            <person name="Fritz H.-J."/>
        </authorList>
    </citation>
    <scope>NUCLEOTIDE SEQUENCE [LARGE SCALE GENOMIC DNA]</scope>
    <source>
        <strain>ATCC BAA-163 / DSM 7039 / HB27</strain>
    </source>
</reference>
<name>PDXT_THET2</name>